<dbReference type="EMBL" id="D42120">
    <property type="protein sequence ID" value="BAA07701.1"/>
    <property type="molecule type" value="mRNA"/>
</dbReference>
<dbReference type="EMBL" id="X84797">
    <property type="protein sequence ID" value="CAA59265.1"/>
    <property type="molecule type" value="mRNA"/>
</dbReference>
<dbReference type="EMBL" id="BC007469">
    <property type="protein sequence ID" value="AAH07469.1"/>
    <property type="molecule type" value="mRNA"/>
</dbReference>
<dbReference type="CCDS" id="CCDS37336.1"/>
<dbReference type="PIR" id="I49760">
    <property type="entry name" value="I49760"/>
</dbReference>
<dbReference type="RefSeq" id="NP_032251.2">
    <property type="nucleotide sequence ID" value="NM_008225.2"/>
</dbReference>
<dbReference type="SMR" id="P49710"/>
<dbReference type="BioGRID" id="200250">
    <property type="interactions" value="7"/>
</dbReference>
<dbReference type="CORUM" id="P49710"/>
<dbReference type="FunCoup" id="P49710">
    <property type="interactions" value="509"/>
</dbReference>
<dbReference type="IntAct" id="P49710">
    <property type="interactions" value="4"/>
</dbReference>
<dbReference type="MINT" id="P49710"/>
<dbReference type="STRING" id="10090.ENSMUSP00000023531"/>
<dbReference type="MoonDB" id="P49710">
    <property type="type" value="Predicted"/>
</dbReference>
<dbReference type="iPTMnet" id="P49710"/>
<dbReference type="PhosphoSitePlus" id="P49710"/>
<dbReference type="SwissPalm" id="P49710"/>
<dbReference type="CPTAC" id="non-CPTAC-3794"/>
<dbReference type="jPOST" id="P49710"/>
<dbReference type="PaxDb" id="10090-ENSMUSP00000023531"/>
<dbReference type="PeptideAtlas" id="P49710"/>
<dbReference type="ProteomicsDB" id="270951"/>
<dbReference type="Antibodypedia" id="16699">
    <property type="antibodies" value="492 antibodies from 40 providers"/>
</dbReference>
<dbReference type="DNASU" id="15163"/>
<dbReference type="Ensembl" id="ENSMUST00000023531.15">
    <property type="protein sequence ID" value="ENSMUSP00000023531.9"/>
    <property type="gene ID" value="ENSMUSG00000022831.15"/>
</dbReference>
<dbReference type="GeneID" id="15163"/>
<dbReference type="KEGG" id="mmu:15163"/>
<dbReference type="UCSC" id="uc007zdi.2">
    <property type="organism name" value="mouse"/>
</dbReference>
<dbReference type="AGR" id="MGI:104568"/>
<dbReference type="CTD" id="3059"/>
<dbReference type="MGI" id="MGI:104568">
    <property type="gene designation" value="Hcls1"/>
</dbReference>
<dbReference type="VEuPathDB" id="HostDB:ENSMUSG00000022831"/>
<dbReference type="eggNOG" id="ENOG502QS6C">
    <property type="taxonomic scope" value="Eukaryota"/>
</dbReference>
<dbReference type="GeneTree" id="ENSGT00940000158997"/>
<dbReference type="HOGENOM" id="CLU_019379_2_0_1"/>
<dbReference type="InParanoid" id="P49710"/>
<dbReference type="OMA" id="KFDESWW"/>
<dbReference type="OrthoDB" id="5971719at2759"/>
<dbReference type="PhylomeDB" id="P49710"/>
<dbReference type="TreeFam" id="TF318935"/>
<dbReference type="BioGRID-ORCS" id="15163">
    <property type="hits" value="2 hits in 78 CRISPR screens"/>
</dbReference>
<dbReference type="PRO" id="PR:P49710"/>
<dbReference type="Proteomes" id="UP000000589">
    <property type="component" value="Chromosome 16"/>
</dbReference>
<dbReference type="RNAct" id="P49710">
    <property type="molecule type" value="protein"/>
</dbReference>
<dbReference type="Bgee" id="ENSMUSG00000022831">
    <property type="expression patterns" value="Expressed in granulocyte and 99 other cell types or tissues"/>
</dbReference>
<dbReference type="ExpressionAtlas" id="P49710">
    <property type="expression patterns" value="baseline and differential"/>
</dbReference>
<dbReference type="GO" id="GO:0005737">
    <property type="term" value="C:cytoplasm"/>
    <property type="evidence" value="ECO:0000314"/>
    <property type="project" value="UniProtKB"/>
</dbReference>
<dbReference type="GO" id="GO:0005829">
    <property type="term" value="C:cytosol"/>
    <property type="evidence" value="ECO:0007669"/>
    <property type="project" value="Ensembl"/>
</dbReference>
<dbReference type="GO" id="GO:0005739">
    <property type="term" value="C:mitochondrion"/>
    <property type="evidence" value="ECO:0007669"/>
    <property type="project" value="UniProtKB-SubCell"/>
</dbReference>
<dbReference type="GO" id="GO:0005634">
    <property type="term" value="C:nucleus"/>
    <property type="evidence" value="ECO:0000314"/>
    <property type="project" value="UniProtKB"/>
</dbReference>
<dbReference type="GO" id="GO:0005886">
    <property type="term" value="C:plasma membrane"/>
    <property type="evidence" value="ECO:0007669"/>
    <property type="project" value="Ensembl"/>
</dbReference>
<dbReference type="GO" id="GO:0005667">
    <property type="term" value="C:transcription regulator complex"/>
    <property type="evidence" value="ECO:0007669"/>
    <property type="project" value="Ensembl"/>
</dbReference>
<dbReference type="GO" id="GO:0019901">
    <property type="term" value="F:protein kinase binding"/>
    <property type="evidence" value="ECO:0007669"/>
    <property type="project" value="Ensembl"/>
</dbReference>
<dbReference type="GO" id="GO:0044877">
    <property type="term" value="F:protein-containing complex binding"/>
    <property type="evidence" value="ECO:0000353"/>
    <property type="project" value="MGI"/>
</dbReference>
<dbReference type="GO" id="GO:0061629">
    <property type="term" value="F:RNA polymerase II-specific DNA-binding transcription factor binding"/>
    <property type="evidence" value="ECO:0007669"/>
    <property type="project" value="Ensembl"/>
</dbReference>
<dbReference type="GO" id="GO:0017124">
    <property type="term" value="F:SH3 domain binding"/>
    <property type="evidence" value="ECO:0000314"/>
    <property type="project" value="MGI"/>
</dbReference>
<dbReference type="GO" id="GO:0035591">
    <property type="term" value="F:signaling adaptor activity"/>
    <property type="evidence" value="ECO:0007669"/>
    <property type="project" value="Ensembl"/>
</dbReference>
<dbReference type="GO" id="GO:0007015">
    <property type="term" value="P:actin filament organization"/>
    <property type="evidence" value="ECO:0007669"/>
    <property type="project" value="Ensembl"/>
</dbReference>
<dbReference type="GO" id="GO:0030218">
    <property type="term" value="P:erythrocyte differentiation"/>
    <property type="evidence" value="ECO:0000315"/>
    <property type="project" value="UniProtKB"/>
</dbReference>
<dbReference type="GO" id="GO:0038158">
    <property type="term" value="P:granulocyte colony-stimulating factor signaling pathway"/>
    <property type="evidence" value="ECO:0007669"/>
    <property type="project" value="Ensembl"/>
</dbReference>
<dbReference type="GO" id="GO:2000107">
    <property type="term" value="P:negative regulation of leukocyte apoptotic process"/>
    <property type="evidence" value="ECO:0007669"/>
    <property type="project" value="Ensembl"/>
</dbReference>
<dbReference type="GO" id="GO:0000122">
    <property type="term" value="P:negative regulation of transcription by RNA polymerase II"/>
    <property type="evidence" value="ECO:0000315"/>
    <property type="project" value="BHF-UCL"/>
</dbReference>
<dbReference type="GO" id="GO:0051169">
    <property type="term" value="P:nuclear transport"/>
    <property type="evidence" value="ECO:0007669"/>
    <property type="project" value="Ensembl"/>
</dbReference>
<dbReference type="GO" id="GO:0008284">
    <property type="term" value="P:positive regulation of cell population proliferation"/>
    <property type="evidence" value="ECO:0000315"/>
    <property type="project" value="UniProtKB"/>
</dbReference>
<dbReference type="GO" id="GO:0030854">
    <property type="term" value="P:positive regulation of granulocyte differentiation"/>
    <property type="evidence" value="ECO:0000315"/>
    <property type="project" value="BHF-UCL"/>
</dbReference>
<dbReference type="GO" id="GO:0045651">
    <property type="term" value="P:positive regulation of macrophage differentiation"/>
    <property type="evidence" value="ECO:0000315"/>
    <property type="project" value="BHF-UCL"/>
</dbReference>
<dbReference type="GO" id="GO:0051897">
    <property type="term" value="P:positive regulation of phosphatidylinositol 3-kinase/protein kinase B signal transduction"/>
    <property type="evidence" value="ECO:0007669"/>
    <property type="project" value="Ensembl"/>
</dbReference>
<dbReference type="GO" id="GO:0042307">
    <property type="term" value="P:positive regulation of protein import into nucleus"/>
    <property type="evidence" value="ECO:0007669"/>
    <property type="project" value="Ensembl"/>
</dbReference>
<dbReference type="GO" id="GO:0045944">
    <property type="term" value="P:positive regulation of transcription by RNA polymerase II"/>
    <property type="evidence" value="ECO:0000315"/>
    <property type="project" value="BHF-UCL"/>
</dbReference>
<dbReference type="GO" id="GO:0030833">
    <property type="term" value="P:regulation of actin filament polymerization"/>
    <property type="evidence" value="ECO:0007669"/>
    <property type="project" value="Ensembl"/>
</dbReference>
<dbReference type="GO" id="GO:0009725">
    <property type="term" value="P:response to hormone"/>
    <property type="evidence" value="ECO:0000314"/>
    <property type="project" value="UniProtKB"/>
</dbReference>
<dbReference type="FunFam" id="2.30.30.40:FF:000139">
    <property type="entry name" value="Hematopoietic cell-specific Lyn substrate 1"/>
    <property type="match status" value="1"/>
</dbReference>
<dbReference type="Gene3D" id="2.30.30.40">
    <property type="entry name" value="SH3 Domains"/>
    <property type="match status" value="1"/>
</dbReference>
<dbReference type="InterPro" id="IPR003134">
    <property type="entry name" value="Hs1_Cortactin"/>
</dbReference>
<dbReference type="InterPro" id="IPR036028">
    <property type="entry name" value="SH3-like_dom_sf"/>
</dbReference>
<dbReference type="InterPro" id="IPR001452">
    <property type="entry name" value="SH3_domain"/>
</dbReference>
<dbReference type="PANTHER" id="PTHR10829">
    <property type="entry name" value="CORTACTIN AND DREBRIN"/>
    <property type="match status" value="1"/>
</dbReference>
<dbReference type="PANTHER" id="PTHR10829:SF5">
    <property type="entry name" value="HEMATOPOIETIC LINEAGE CELL-SPECIFIC PROTEIN"/>
    <property type="match status" value="1"/>
</dbReference>
<dbReference type="Pfam" id="PF02218">
    <property type="entry name" value="HS1_rep"/>
    <property type="match status" value="4"/>
</dbReference>
<dbReference type="Pfam" id="PF00018">
    <property type="entry name" value="SH3_1"/>
    <property type="match status" value="1"/>
</dbReference>
<dbReference type="PRINTS" id="PR00499">
    <property type="entry name" value="P67PHOX"/>
</dbReference>
<dbReference type="PRINTS" id="PR00452">
    <property type="entry name" value="SH3DOMAIN"/>
</dbReference>
<dbReference type="SMART" id="SM00326">
    <property type="entry name" value="SH3"/>
    <property type="match status" value="1"/>
</dbReference>
<dbReference type="SUPFAM" id="SSF50044">
    <property type="entry name" value="SH3-domain"/>
    <property type="match status" value="1"/>
</dbReference>
<dbReference type="PROSITE" id="PS51090">
    <property type="entry name" value="CORTACTIN"/>
    <property type="match status" value="4"/>
</dbReference>
<dbReference type="PROSITE" id="PS50002">
    <property type="entry name" value="SH3"/>
    <property type="match status" value="1"/>
</dbReference>
<proteinExistence type="evidence at protein level"/>
<comment type="function">
    <text evidence="1">Substrate of the antigen receptor-coupled tyrosine kinase. Plays a role in antigen receptor signaling for both clonal expansion and deletion in lymphoid cells. May also be involved in the regulation of gene expression (By similarity).</text>
</comment>
<comment type="subunit">
    <text evidence="1 5 6 7 8">Interacts (via SH2 domain) with FGR (By similarity). Associates with the SH2 and SH3 domains of LCK. Binding to he LCK SH3 domain occurs constitutively, while binding to the LCK SH2 domain occurs only upon TCR stimulation. A similar binding pattern was observed with LYN, but not with FYN in which the FYN SH2 region associates upon TCR stimulation but the FYN SH3 region does not associate regardless of TCR stimulation. Directly associates with HAX1, through binding to its C-terminal region. Interacts with HS1BP3. Interacts with FES/FPS. Forms a multiprotein complex with LYN and ANKRD54.</text>
</comment>
<comment type="interaction">
    <interactant intactId="EBI-924601">
        <id>P49710</id>
    </interactant>
    <interactant intactId="EBI-643537">
        <id>P25911</id>
        <label>Lyn</label>
    </interactant>
    <organismsDiffer>false</organismsDiffer>
    <experiments>10</experiments>
</comment>
<comment type="subcellular location">
    <subcellularLocation>
        <location evidence="1">Mitochondrion</location>
    </subcellularLocation>
</comment>
<comment type="tissue specificity">
    <text>Expressed only in tissues and cells of hematopoietic origin.</text>
</comment>
<comment type="PTM">
    <text evidence="1 6">Phosphorylated by LYN, FYN and FGR after cross-linking of surface IgM on B-cells. Phosphorylation by LYN, FYN and FGR requires prior phosphorylation by SYK (By similarity). Binds to LCK in vivo, and is tyrosine phosphorylated upon TCR stimulation. Phosphorylated by FES.</text>
</comment>
<feature type="chain" id="PRO_0000083922" description="Hematopoietic lineage cell-specific protein">
    <location>
        <begin position="1"/>
        <end position="486"/>
    </location>
</feature>
<feature type="repeat" description="Cortactin 1">
    <location>
        <begin position="79"/>
        <end position="115"/>
    </location>
</feature>
<feature type="repeat" description="Cortactin 2">
    <location>
        <begin position="116"/>
        <end position="152"/>
    </location>
</feature>
<feature type="repeat" description="Cortactin 3">
    <location>
        <begin position="153"/>
        <end position="189"/>
    </location>
</feature>
<feature type="repeat" description="Cortactin 4; truncated">
    <location>
        <begin position="190"/>
        <end position="212"/>
    </location>
</feature>
<feature type="domain" description="SH3" evidence="3">
    <location>
        <begin position="429"/>
        <end position="486"/>
    </location>
</feature>
<feature type="region of interest" description="Involved in HAX-1 binding" evidence="1">
    <location>
        <begin position="27"/>
        <end position="66"/>
    </location>
</feature>
<feature type="region of interest" description="Disordered" evidence="4">
    <location>
        <begin position="226"/>
        <end position="430"/>
    </location>
</feature>
<feature type="compositionally biased region" description="Basic and acidic residues" evidence="4">
    <location>
        <begin position="240"/>
        <end position="258"/>
    </location>
</feature>
<feature type="compositionally biased region" description="Basic and acidic residues" evidence="4">
    <location>
        <begin position="265"/>
        <end position="276"/>
    </location>
</feature>
<feature type="compositionally biased region" description="Low complexity" evidence="4">
    <location>
        <begin position="358"/>
        <end position="367"/>
    </location>
</feature>
<feature type="compositionally biased region" description="Acidic residues" evidence="4">
    <location>
        <begin position="368"/>
        <end position="413"/>
    </location>
</feature>
<feature type="modified residue" description="N6-acetyllysine" evidence="2">
    <location>
        <position position="41"/>
    </location>
</feature>
<feature type="modified residue" description="N6-acetyllysine" evidence="2">
    <location>
        <position position="123"/>
    </location>
</feature>
<feature type="modified residue" description="Phosphotyrosine" evidence="11">
    <location>
        <position position="140"/>
    </location>
</feature>
<feature type="modified residue" description="N6-acetyllysine" evidence="2">
    <location>
        <position position="192"/>
    </location>
</feature>
<feature type="modified residue" description="Phosphotyrosine" evidence="2">
    <location>
        <position position="198"/>
    </location>
</feature>
<feature type="modified residue" description="Phosphotyrosine; by FGR" evidence="2">
    <location>
        <position position="222"/>
    </location>
</feature>
<feature type="modified residue" description="N6-acetyllysine" evidence="2">
    <location>
        <position position="241"/>
    </location>
</feature>
<feature type="modified residue" description="Phosphoserine" evidence="2">
    <location>
        <position position="275"/>
    </location>
</feature>
<feature type="modified residue" description="Phosphothreonine" evidence="12">
    <location>
        <position position="330"/>
    </location>
</feature>
<feature type="modified residue" description="Phosphoserine" evidence="12">
    <location>
        <position position="333"/>
    </location>
</feature>
<feature type="modified residue" description="Phosphotyrosine; by SYK and FES" evidence="10">
    <location>
        <position position="388"/>
    </location>
</feature>
<feature type="modified residue" description="Phosphotyrosine; by SYK and FES" evidence="10">
    <location>
        <position position="405"/>
    </location>
</feature>
<feature type="mutagenesis site" description="Strongly reduces phosphorylation by FES. Abolishes phosphorylation by FES; when associated with F-405." evidence="6">
    <original>Y</original>
    <variation>F</variation>
    <location>
        <position position="388"/>
    </location>
</feature>
<feature type="mutagenesis site" description="Minor effect on phosphorylation by FES. Abolishes phosphorylation by FES; when associated with F-388." evidence="6">
    <original>Y</original>
    <variation>F</variation>
    <location>
        <position position="405"/>
    </location>
</feature>
<feature type="sequence conflict" description="In Ref. 1; BAA07701 and 2; CAA59265." evidence="9" ref="1 2">
    <original>R</original>
    <variation>Q</variation>
    <location>
        <position position="86"/>
    </location>
</feature>
<reference key="1">
    <citation type="journal article" date="1995" name="Biochem. Biophys. Res. Commun.">
        <title>Molecular cloning and characterization of mouse HS1.</title>
        <authorList>
            <person name="Kitamura D."/>
            <person name="Kaneko H."/>
            <person name="Taniuchi I."/>
            <person name="Yamamura K."/>
            <person name="Watanabe T."/>
        </authorList>
    </citation>
    <scope>NUCLEOTIDE SEQUENCE [MRNA]</scope>
</reference>
<reference key="2">
    <citation type="journal article" date="1995" name="EMBO J.">
        <title>LckBP1, a proline-rich protein expressed in haematopoietic lineage cells, directly associates with the SH3 domain of protein tyrosine kinase p56(lck).</title>
        <authorList>
            <person name="Takemoto Y."/>
            <person name="Furuta M."/>
            <person name="Li X.-K."/>
            <person name="Strong-Sparks W.J."/>
            <person name="Hashimoto Y."/>
        </authorList>
    </citation>
    <scope>NUCLEOTIDE SEQUENCE [MRNA]</scope>
    <source>
        <tissue>Thymocyte</tissue>
    </source>
</reference>
<reference key="3">
    <citation type="journal article" date="2004" name="Genome Res.">
        <title>The status, quality, and expansion of the NIH full-length cDNA project: the Mammalian Gene Collection (MGC).</title>
        <authorList>
            <consortium name="The MGC Project Team"/>
        </authorList>
    </citation>
    <scope>NUCLEOTIDE SEQUENCE [LARGE SCALE MRNA]</scope>
    <source>
        <strain>FVB/N</strain>
        <tissue>Mammary tumor</tissue>
    </source>
</reference>
<reference key="4">
    <citation type="journal article" date="1996" name="Int. Immunol.">
        <title>Distinct binding patterns of HS1 to the Src SH2 and SH3 domains reflect possible mechanisms of recruitment and activation of downstream molecules.</title>
        <authorList>
            <person name="Takemoto Y."/>
            <person name="Sato M."/>
            <person name="Furuta M."/>
            <person name="Hashimoto Y."/>
        </authorList>
    </citation>
    <scope>INTERACTION WITH LCK</scope>
    <scope>BINDING PATTERN OF SERVERAL SRC KINASES</scope>
    <source>
        <strain>BALB/cJ</strain>
    </source>
</reference>
<reference key="5">
    <citation type="journal article" date="1999" name="Int. Immunol.">
        <title>Isolation and characterization of a novel HS1 SH3 domain binding protein, HS1BP3.</title>
        <authorList>
            <person name="Takemoto Y."/>
            <person name="Furuta M."/>
            <person name="Sato M."/>
            <person name="Kubo M."/>
            <person name="Hashimoto Y."/>
        </authorList>
    </citation>
    <scope>INTERACTION WITH HS1BP3</scope>
</reference>
<reference key="6">
    <citation type="journal article" date="2007" name="J. Immunol.">
        <title>Quantitative time-resolved phosphoproteomic analysis of mast cell signaling.</title>
        <authorList>
            <person name="Cao L."/>
            <person name="Yu K."/>
            <person name="Banh C."/>
            <person name="Nguyen V."/>
            <person name="Ritz A."/>
            <person name="Raphael B.J."/>
            <person name="Kawakami Y."/>
            <person name="Kawakami T."/>
            <person name="Salomon A.R."/>
        </authorList>
    </citation>
    <scope>PHOSPHORYLATION [LARGE SCALE ANALYSIS] AT TYR-140</scope>
    <scope>IDENTIFICATION BY MASS SPECTROMETRY [LARGE SCALE ANALYSIS]</scope>
    <source>
        <tissue>Mast cell</tissue>
    </source>
</reference>
<reference key="7">
    <citation type="journal article" date="2009" name="Blood">
        <title>Liar, a novel Lyn-binding nuclear/cytoplasmic shuttling protein that influences erythropoietin-induced differentiation.</title>
        <authorList>
            <person name="Samuels A.L."/>
            <person name="Klinken S.P."/>
            <person name="Ingley E."/>
        </authorList>
    </citation>
    <scope>INTERACTION WITH ANKRD54</scope>
</reference>
<reference key="8">
    <citation type="journal article" date="2009" name="Mol. Cell. Biol.">
        <title>Contributions of F-BAR and SH2 domains of Fes protein tyrosine kinase for coupling to the FcepsilonRI pathway in mast cells.</title>
        <authorList>
            <person name="McPherson V.A."/>
            <person name="Everingham S."/>
            <person name="Karisch R."/>
            <person name="Smith J.A."/>
            <person name="Udell C.M."/>
            <person name="Zheng J."/>
            <person name="Jia Z."/>
            <person name="Craig A.W."/>
        </authorList>
    </citation>
    <scope>INTERACTION WITH FES/FPS</scope>
    <scope>PHOSPHORYLATION AT TYR-388 AND TYR-405</scope>
    <scope>MUTAGENESIS OF TYR-388 AND TYR-405</scope>
</reference>
<reference key="9">
    <citation type="journal article" date="2010" name="Cell">
        <title>A tissue-specific atlas of mouse protein phosphorylation and expression.</title>
        <authorList>
            <person name="Huttlin E.L."/>
            <person name="Jedrychowski M.P."/>
            <person name="Elias J.E."/>
            <person name="Goswami T."/>
            <person name="Rad R."/>
            <person name="Beausoleil S.A."/>
            <person name="Villen J."/>
            <person name="Haas W."/>
            <person name="Sowa M.E."/>
            <person name="Gygi S.P."/>
        </authorList>
    </citation>
    <scope>PHOSPHORYLATION [LARGE SCALE ANALYSIS] AT THR-330 AND SER-333</scope>
    <scope>IDENTIFICATION BY MASS SPECTROMETRY [LARGE SCALE ANALYSIS]</scope>
    <source>
        <tissue>Heart</tissue>
        <tissue>Kidney</tissue>
        <tissue>Lung</tissue>
        <tissue>Spleen</tissue>
    </source>
</reference>
<sequence length="486" mass="54240">MWKSVVGHDVSVSVETQGDDWDTDPDFVNDISEKEQRWGAKTIEGSGRTEHINIHQLRNKVSEEHDILKKKELESGPKASHGYGGRFGVERDRMDKSAVGHEYVADVEKHSSQTDAARGFGGKYGVERDRADKSAVGFDYKGEVEKHASQKDYSHGFGGRYGVEKDKRDKAALGYDYKGETEKHESQRDYAKGFGGQYGIQKDRVDKSAVGFNEMEAPTTAYKKTTPIEAASSGARGLKAKFESLAEEKRKREEEEKAQQMARQQQERKAVVKMSREVQQPSMPVEEPAAPAQLPKKISSEVWPPAESHLPPESQPVRSRREYPVPSLPTRQSPLQNHLEDNEEPPALPPRTPEGLQVVEEPVYEAAPELEPEPEPDYEPEPETEPDYEDVGELDRQDEDAEGDYEDVLEPEDTPSLSYQAGPSAGAGGAGISAIALYDYQGEGSDELSFDPDDIITDIEMVDEGWWRGQCRGHFGLFPANYVKLL</sequence>
<accession>P49710</accession>
<accession>Q922I8</accession>
<name>HCLS1_MOUSE</name>
<protein>
    <recommendedName>
        <fullName>Hematopoietic lineage cell-specific protein</fullName>
    </recommendedName>
    <alternativeName>
        <fullName>Hematopoietic cell-specific LYN substrate 1</fullName>
    </alternativeName>
    <alternativeName>
        <fullName>LckBP1</fullName>
    </alternativeName>
</protein>
<keyword id="KW-0007">Acetylation</keyword>
<keyword id="KW-0496">Mitochondrion</keyword>
<keyword id="KW-0597">Phosphoprotein</keyword>
<keyword id="KW-1185">Reference proteome</keyword>
<keyword id="KW-0677">Repeat</keyword>
<keyword id="KW-0728">SH3 domain</keyword>
<gene>
    <name type="primary">Hcls1</name>
    <name type="synonym">Hs1</name>
</gene>
<organism>
    <name type="scientific">Mus musculus</name>
    <name type="common">Mouse</name>
    <dbReference type="NCBI Taxonomy" id="10090"/>
    <lineage>
        <taxon>Eukaryota</taxon>
        <taxon>Metazoa</taxon>
        <taxon>Chordata</taxon>
        <taxon>Craniata</taxon>
        <taxon>Vertebrata</taxon>
        <taxon>Euteleostomi</taxon>
        <taxon>Mammalia</taxon>
        <taxon>Eutheria</taxon>
        <taxon>Euarchontoglires</taxon>
        <taxon>Glires</taxon>
        <taxon>Rodentia</taxon>
        <taxon>Myomorpha</taxon>
        <taxon>Muroidea</taxon>
        <taxon>Muridae</taxon>
        <taxon>Murinae</taxon>
        <taxon>Mus</taxon>
        <taxon>Mus</taxon>
    </lineage>
</organism>
<evidence type="ECO:0000250" key="1"/>
<evidence type="ECO:0000250" key="2">
    <source>
        <dbReference type="UniProtKB" id="P14317"/>
    </source>
</evidence>
<evidence type="ECO:0000255" key="3">
    <source>
        <dbReference type="PROSITE-ProRule" id="PRU00192"/>
    </source>
</evidence>
<evidence type="ECO:0000256" key="4">
    <source>
        <dbReference type="SAM" id="MobiDB-lite"/>
    </source>
</evidence>
<evidence type="ECO:0000269" key="5">
    <source>
    </source>
</evidence>
<evidence type="ECO:0000269" key="6">
    <source>
    </source>
</evidence>
<evidence type="ECO:0000269" key="7">
    <source>
    </source>
</evidence>
<evidence type="ECO:0000269" key="8">
    <source>
    </source>
</evidence>
<evidence type="ECO:0000305" key="9"/>
<evidence type="ECO:0000305" key="10">
    <source>
    </source>
</evidence>
<evidence type="ECO:0007744" key="11">
    <source>
    </source>
</evidence>
<evidence type="ECO:0007744" key="12">
    <source>
    </source>
</evidence>